<comment type="function">
    <text evidence="1">Plays a role in virus cell tropism, and may be required for efficient virus replication in macrophages.</text>
</comment>
<comment type="induction">
    <text evidence="2">Expressed in the early phase of the viral replicative cycle.</text>
</comment>
<comment type="similarity">
    <text evidence="2">Belongs to the asfivirus MGF 505 family.</text>
</comment>
<reference key="1">
    <citation type="submission" date="2003-03" db="EMBL/GenBank/DDBJ databases">
        <title>African swine fever virus genomes.</title>
        <authorList>
            <person name="Kutish G.F."/>
            <person name="Rock D.L."/>
        </authorList>
    </citation>
    <scope>NUCLEOTIDE SEQUENCE [LARGE SCALE GENOMIC DNA]</scope>
</reference>
<proteinExistence type="inferred from homology"/>
<evidence type="ECO:0000250" key="1">
    <source>
        <dbReference type="UniProtKB" id="Q89777"/>
    </source>
</evidence>
<evidence type="ECO:0000305" key="2"/>
<name>5055R_ASFK5</name>
<dbReference type="EMBL" id="AY261360">
    <property type="status" value="NOT_ANNOTATED_CDS"/>
    <property type="molecule type" value="Genomic_DNA"/>
</dbReference>
<dbReference type="SMR" id="P0C9T6"/>
<dbReference type="Proteomes" id="UP000000861">
    <property type="component" value="Segment"/>
</dbReference>
<dbReference type="InterPro" id="IPR004858">
    <property type="entry name" value="MGF_505"/>
</dbReference>
<dbReference type="Pfam" id="PF03158">
    <property type="entry name" value="DUF249"/>
    <property type="match status" value="1"/>
</dbReference>
<organismHost>
    <name type="scientific">Ornithodoros</name>
    <name type="common">relapsing fever ticks</name>
    <dbReference type="NCBI Taxonomy" id="6937"/>
</organismHost>
<organismHost>
    <name type="scientific">Phacochoerus aethiopicus</name>
    <name type="common">Warthog</name>
    <dbReference type="NCBI Taxonomy" id="85517"/>
</organismHost>
<organismHost>
    <name type="scientific">Phacochoerus africanus</name>
    <name type="common">Warthog</name>
    <dbReference type="NCBI Taxonomy" id="41426"/>
</organismHost>
<organismHost>
    <name type="scientific">Potamochoerus larvatus</name>
    <name type="common">Bushpig</name>
    <dbReference type="NCBI Taxonomy" id="273792"/>
</organismHost>
<organismHost>
    <name type="scientific">Sus scrofa</name>
    <name type="common">Pig</name>
    <dbReference type="NCBI Taxonomy" id="9823"/>
</organismHost>
<protein>
    <recommendedName>
        <fullName>Protein MGF 505-5R</fullName>
    </recommendedName>
</protein>
<gene>
    <name type="ordered locus">Ken-042</name>
</gene>
<organism>
    <name type="scientific">African swine fever virus (isolate Pig/Kenya/KEN-50/1950)</name>
    <name type="common">ASFV</name>
    <dbReference type="NCBI Taxonomy" id="561445"/>
    <lineage>
        <taxon>Viruses</taxon>
        <taxon>Varidnaviria</taxon>
        <taxon>Bamfordvirae</taxon>
        <taxon>Nucleocytoviricota</taxon>
        <taxon>Pokkesviricetes</taxon>
        <taxon>Asfuvirales</taxon>
        <taxon>Asfarviridae</taxon>
        <taxon>Asfivirus</taxon>
        <taxon>African swine fever virus</taxon>
    </lineage>
</organism>
<sequence length="502" mass="58810">MFSLQEICRKNIYLLPDWLGEHVVQRLGLYWKKHGTLQRIGDDYVLIQQDLIIPINEALRMAGEEGNDEVIELLLLWEGNIYYAIIGALEGDHDSLAYKLYSQIRDCHNILPLIQDPKIFEKCHDLDESCNISCLVLNAVKHDMLCILQEYKMLLSGGDIQEVFETACRSQKYDIVTWMGQNIAIYNPGVIFDIAFDKMNVSLLSIGYTLLFEHHINNMIENNMDTNSLLMQHLEWAASTGFLHFMLETLKYGGDVTIIELSAAVKYDHRKVLDYFLRRKKLPRETLEKLLLLAICEACSKKTLNLLLSYLNYSVDNIRKKILQYVKQYETTLIIKILWKKRKINLIDPILADFVGYHSYTYLINFMREFSIYPERIIKMAARVAREDLVIKFSKKVCKDPIDRLNYLKTLVYTMRHKAGKRVLIYTIHNLYKASYLESKEMFKLARFYARHDATFQFISICHDLSKLNIDIKNLLSECLEIAIKNNYPQLIKAIKMDMNYE</sequence>
<keyword id="KW-0244">Early protein</keyword>
<feature type="chain" id="PRO_0000373333" description="Protein MGF 505-5R">
    <location>
        <begin position="1"/>
        <end position="502"/>
    </location>
</feature>
<accession>P0C9T6</accession>